<gene>
    <name evidence="1" type="primary">rpsP</name>
    <name type="ordered locus">BCA_3944</name>
</gene>
<dbReference type="EMBL" id="CP001407">
    <property type="protein sequence ID" value="ACO27031.1"/>
    <property type="molecule type" value="Genomic_DNA"/>
</dbReference>
<dbReference type="RefSeq" id="WP_000268750.1">
    <property type="nucleotide sequence ID" value="NZ_CP009318.1"/>
</dbReference>
<dbReference type="SMR" id="C1EP68"/>
<dbReference type="GeneID" id="93007268"/>
<dbReference type="KEGG" id="bcx:BCA_3944"/>
<dbReference type="PATRIC" id="fig|572264.18.peg.3900"/>
<dbReference type="Proteomes" id="UP000002210">
    <property type="component" value="Chromosome"/>
</dbReference>
<dbReference type="GO" id="GO:0005737">
    <property type="term" value="C:cytoplasm"/>
    <property type="evidence" value="ECO:0007669"/>
    <property type="project" value="UniProtKB-ARBA"/>
</dbReference>
<dbReference type="GO" id="GO:0015935">
    <property type="term" value="C:small ribosomal subunit"/>
    <property type="evidence" value="ECO:0007669"/>
    <property type="project" value="TreeGrafter"/>
</dbReference>
<dbReference type="GO" id="GO:0003735">
    <property type="term" value="F:structural constituent of ribosome"/>
    <property type="evidence" value="ECO:0007669"/>
    <property type="project" value="InterPro"/>
</dbReference>
<dbReference type="GO" id="GO:0006412">
    <property type="term" value="P:translation"/>
    <property type="evidence" value="ECO:0007669"/>
    <property type="project" value="UniProtKB-UniRule"/>
</dbReference>
<dbReference type="FunFam" id="3.30.1320.10:FF:000002">
    <property type="entry name" value="30S ribosomal protein S16"/>
    <property type="match status" value="1"/>
</dbReference>
<dbReference type="Gene3D" id="3.30.1320.10">
    <property type="match status" value="1"/>
</dbReference>
<dbReference type="HAMAP" id="MF_00385">
    <property type="entry name" value="Ribosomal_bS16"/>
    <property type="match status" value="1"/>
</dbReference>
<dbReference type="InterPro" id="IPR000307">
    <property type="entry name" value="Ribosomal_bS16"/>
</dbReference>
<dbReference type="InterPro" id="IPR020592">
    <property type="entry name" value="Ribosomal_bS16_CS"/>
</dbReference>
<dbReference type="InterPro" id="IPR023803">
    <property type="entry name" value="Ribosomal_bS16_dom_sf"/>
</dbReference>
<dbReference type="NCBIfam" id="TIGR00002">
    <property type="entry name" value="S16"/>
    <property type="match status" value="1"/>
</dbReference>
<dbReference type="PANTHER" id="PTHR12919">
    <property type="entry name" value="30S RIBOSOMAL PROTEIN S16"/>
    <property type="match status" value="1"/>
</dbReference>
<dbReference type="PANTHER" id="PTHR12919:SF20">
    <property type="entry name" value="SMALL RIBOSOMAL SUBUNIT PROTEIN BS16M"/>
    <property type="match status" value="1"/>
</dbReference>
<dbReference type="Pfam" id="PF00886">
    <property type="entry name" value="Ribosomal_S16"/>
    <property type="match status" value="1"/>
</dbReference>
<dbReference type="SUPFAM" id="SSF54565">
    <property type="entry name" value="Ribosomal protein S16"/>
    <property type="match status" value="1"/>
</dbReference>
<dbReference type="PROSITE" id="PS00732">
    <property type="entry name" value="RIBOSOMAL_S16"/>
    <property type="match status" value="1"/>
</dbReference>
<accession>C1EP68</accession>
<keyword id="KW-0687">Ribonucleoprotein</keyword>
<keyword id="KW-0689">Ribosomal protein</keyword>
<feature type="chain" id="PRO_1000196330" description="Small ribosomal subunit protein bS16">
    <location>
        <begin position="1"/>
        <end position="90"/>
    </location>
</feature>
<sequence>MAVKIRLKRMGAKKTPFYRVVVADSRSPRDGRFIEEIGTYNPVAQPAEVKINEEAALKWLGNGAKPSDTVRNLFSNQGIMEKFHLSKQGK</sequence>
<name>RS16_BACC3</name>
<evidence type="ECO:0000255" key="1">
    <source>
        <dbReference type="HAMAP-Rule" id="MF_00385"/>
    </source>
</evidence>
<evidence type="ECO:0000305" key="2"/>
<proteinExistence type="inferred from homology"/>
<organism>
    <name type="scientific">Bacillus cereus (strain 03BB102)</name>
    <dbReference type="NCBI Taxonomy" id="572264"/>
    <lineage>
        <taxon>Bacteria</taxon>
        <taxon>Bacillati</taxon>
        <taxon>Bacillota</taxon>
        <taxon>Bacilli</taxon>
        <taxon>Bacillales</taxon>
        <taxon>Bacillaceae</taxon>
        <taxon>Bacillus</taxon>
        <taxon>Bacillus cereus group</taxon>
    </lineage>
</organism>
<comment type="similarity">
    <text evidence="1">Belongs to the bacterial ribosomal protein bS16 family.</text>
</comment>
<reference key="1">
    <citation type="submission" date="2009-02" db="EMBL/GenBank/DDBJ databases">
        <title>Genome sequence of Bacillus cereus 03BB102.</title>
        <authorList>
            <person name="Dodson R.J."/>
            <person name="Jackson P."/>
            <person name="Munk A.C."/>
            <person name="Brettin T."/>
            <person name="Bruce D."/>
            <person name="Detter C."/>
            <person name="Tapia R."/>
            <person name="Han C."/>
            <person name="Sutton G."/>
            <person name="Sims D."/>
        </authorList>
    </citation>
    <scope>NUCLEOTIDE SEQUENCE [LARGE SCALE GENOMIC DNA]</scope>
    <source>
        <strain>03BB102</strain>
    </source>
</reference>
<protein>
    <recommendedName>
        <fullName evidence="1">Small ribosomal subunit protein bS16</fullName>
    </recommendedName>
    <alternativeName>
        <fullName evidence="2">30S ribosomal protein S16</fullName>
    </alternativeName>
</protein>